<accession>B6IRR7</accession>
<evidence type="ECO:0000255" key="1">
    <source>
        <dbReference type="HAMAP-Rule" id="MF_01326"/>
    </source>
</evidence>
<evidence type="ECO:0000305" key="2"/>
<organism>
    <name type="scientific">Rhodospirillum centenum (strain ATCC 51521 / SW)</name>
    <dbReference type="NCBI Taxonomy" id="414684"/>
    <lineage>
        <taxon>Bacteria</taxon>
        <taxon>Pseudomonadati</taxon>
        <taxon>Pseudomonadota</taxon>
        <taxon>Alphaproteobacteria</taxon>
        <taxon>Rhodospirillales</taxon>
        <taxon>Rhodospirillaceae</taxon>
        <taxon>Rhodospirillum</taxon>
    </lineage>
</organism>
<sequence>MAAKIRKNDRVVVLTGKDKGKTGEVIEVLPKENRVKVRGVNLVKKHQRPTPTQQGGIVEIEAALHVSNVAHIDPKTSKPTRVGFKTLEDGRKVRVAKASGEIIDL</sequence>
<keyword id="KW-1185">Reference proteome</keyword>
<keyword id="KW-0687">Ribonucleoprotein</keyword>
<keyword id="KW-0689">Ribosomal protein</keyword>
<keyword id="KW-0694">RNA-binding</keyword>
<keyword id="KW-0699">rRNA-binding</keyword>
<protein>
    <recommendedName>
        <fullName evidence="1">Large ribosomal subunit protein uL24</fullName>
    </recommendedName>
    <alternativeName>
        <fullName evidence="2">50S ribosomal protein L24</fullName>
    </alternativeName>
</protein>
<feature type="chain" id="PRO_1000142029" description="Large ribosomal subunit protein uL24">
    <location>
        <begin position="1"/>
        <end position="105"/>
    </location>
</feature>
<comment type="function">
    <text evidence="1">One of two assembly initiator proteins, it binds directly to the 5'-end of the 23S rRNA, where it nucleates assembly of the 50S subunit.</text>
</comment>
<comment type="function">
    <text evidence="1">One of the proteins that surrounds the polypeptide exit tunnel on the outside of the subunit.</text>
</comment>
<comment type="subunit">
    <text evidence="1">Part of the 50S ribosomal subunit.</text>
</comment>
<comment type="similarity">
    <text evidence="1">Belongs to the universal ribosomal protein uL24 family.</text>
</comment>
<reference key="1">
    <citation type="submission" date="2007-03" db="EMBL/GenBank/DDBJ databases">
        <title>Genome sequence of Rhodospirillum centenum.</title>
        <authorList>
            <person name="Touchman J.W."/>
            <person name="Bauer C."/>
            <person name="Blankenship R.E."/>
        </authorList>
    </citation>
    <scope>NUCLEOTIDE SEQUENCE [LARGE SCALE GENOMIC DNA]</scope>
    <source>
        <strain>ATCC 51521 / SW</strain>
    </source>
</reference>
<dbReference type="EMBL" id="CP000613">
    <property type="protein sequence ID" value="ACI98153.1"/>
    <property type="molecule type" value="Genomic_DNA"/>
</dbReference>
<dbReference type="SMR" id="B6IRR7"/>
<dbReference type="STRING" id="414684.RC1_0722"/>
<dbReference type="KEGG" id="rce:RC1_0722"/>
<dbReference type="eggNOG" id="COG0198">
    <property type="taxonomic scope" value="Bacteria"/>
</dbReference>
<dbReference type="HOGENOM" id="CLU_093315_2_0_5"/>
<dbReference type="OrthoDB" id="9807419at2"/>
<dbReference type="Proteomes" id="UP000001591">
    <property type="component" value="Chromosome"/>
</dbReference>
<dbReference type="GO" id="GO:1990904">
    <property type="term" value="C:ribonucleoprotein complex"/>
    <property type="evidence" value="ECO:0007669"/>
    <property type="project" value="UniProtKB-KW"/>
</dbReference>
<dbReference type="GO" id="GO:0005840">
    <property type="term" value="C:ribosome"/>
    <property type="evidence" value="ECO:0007669"/>
    <property type="project" value="UniProtKB-KW"/>
</dbReference>
<dbReference type="GO" id="GO:0019843">
    <property type="term" value="F:rRNA binding"/>
    <property type="evidence" value="ECO:0007669"/>
    <property type="project" value="UniProtKB-UniRule"/>
</dbReference>
<dbReference type="GO" id="GO:0003735">
    <property type="term" value="F:structural constituent of ribosome"/>
    <property type="evidence" value="ECO:0007669"/>
    <property type="project" value="InterPro"/>
</dbReference>
<dbReference type="GO" id="GO:0006412">
    <property type="term" value="P:translation"/>
    <property type="evidence" value="ECO:0007669"/>
    <property type="project" value="UniProtKB-UniRule"/>
</dbReference>
<dbReference type="CDD" id="cd06089">
    <property type="entry name" value="KOW_RPL26"/>
    <property type="match status" value="1"/>
</dbReference>
<dbReference type="FunFam" id="2.30.30.30:FF:000004">
    <property type="entry name" value="50S ribosomal protein L24"/>
    <property type="match status" value="1"/>
</dbReference>
<dbReference type="Gene3D" id="2.30.30.30">
    <property type="match status" value="1"/>
</dbReference>
<dbReference type="HAMAP" id="MF_01326_B">
    <property type="entry name" value="Ribosomal_uL24_B"/>
    <property type="match status" value="1"/>
</dbReference>
<dbReference type="InterPro" id="IPR005824">
    <property type="entry name" value="KOW"/>
</dbReference>
<dbReference type="InterPro" id="IPR014722">
    <property type="entry name" value="Rib_uL2_dom2"/>
</dbReference>
<dbReference type="InterPro" id="IPR003256">
    <property type="entry name" value="Ribosomal_uL24"/>
</dbReference>
<dbReference type="InterPro" id="IPR005825">
    <property type="entry name" value="Ribosomal_uL24_CS"/>
</dbReference>
<dbReference type="InterPro" id="IPR041988">
    <property type="entry name" value="Ribosomal_uL24_KOW"/>
</dbReference>
<dbReference type="InterPro" id="IPR008991">
    <property type="entry name" value="Translation_prot_SH3-like_sf"/>
</dbReference>
<dbReference type="NCBIfam" id="TIGR01079">
    <property type="entry name" value="rplX_bact"/>
    <property type="match status" value="1"/>
</dbReference>
<dbReference type="PANTHER" id="PTHR12903">
    <property type="entry name" value="MITOCHONDRIAL RIBOSOMAL PROTEIN L24"/>
    <property type="match status" value="1"/>
</dbReference>
<dbReference type="Pfam" id="PF00467">
    <property type="entry name" value="KOW"/>
    <property type="match status" value="1"/>
</dbReference>
<dbReference type="Pfam" id="PF17136">
    <property type="entry name" value="ribosomal_L24"/>
    <property type="match status" value="1"/>
</dbReference>
<dbReference type="SMART" id="SM00739">
    <property type="entry name" value="KOW"/>
    <property type="match status" value="1"/>
</dbReference>
<dbReference type="SUPFAM" id="SSF50104">
    <property type="entry name" value="Translation proteins SH3-like domain"/>
    <property type="match status" value="1"/>
</dbReference>
<dbReference type="PROSITE" id="PS01108">
    <property type="entry name" value="RIBOSOMAL_L24"/>
    <property type="match status" value="1"/>
</dbReference>
<gene>
    <name evidence="1" type="primary">rplX</name>
    <name type="ordered locus">RC1_0722</name>
</gene>
<name>RL24_RHOCS</name>
<proteinExistence type="inferred from homology"/>